<keyword id="KW-0150">Chloroplast</keyword>
<keyword id="KW-0934">Plastid</keyword>
<keyword id="KW-0687">Ribonucleoprotein</keyword>
<keyword id="KW-0689">Ribosomal protein</keyword>
<keyword id="KW-0694">RNA-binding</keyword>
<keyword id="KW-0699">rRNA-binding</keyword>
<reference key="1">
    <citation type="journal article" date="2006" name="BMC Plant Biol.">
        <title>Rapid and accurate pyrosequencing of angiosperm plastid genomes.</title>
        <authorList>
            <person name="Moore M.J."/>
            <person name="Dhingra A."/>
            <person name="Soltis P.S."/>
            <person name="Shaw R."/>
            <person name="Farmerie W.G."/>
            <person name="Folta K.M."/>
            <person name="Soltis D.E."/>
        </authorList>
    </citation>
    <scope>NUCLEOTIDE SEQUENCE [LARGE SCALE GENOMIC DNA]</scope>
</reference>
<proteinExistence type="inferred from homology"/>
<comment type="subunit">
    <text evidence="1">Part of the 30S ribosomal subunit.</text>
</comment>
<comment type="subcellular location">
    <subcellularLocation>
        <location>Plastid</location>
        <location>Chloroplast</location>
    </subcellularLocation>
</comment>
<comment type="similarity">
    <text evidence="2">Belongs to the universal ribosomal protein uS3 family.</text>
</comment>
<sequence length="217" mass="25154">MGQKINPLGFRLGTTQNHHSVWFAQPKSYSEGLQEDQKIRDCIKNYVQKNKRIPLVEGIARIEIQKRIDLIQVIIYMGFPKLLIEDRPRGIEELQINLQKEFNSMNRKLNIAITRIAKPYGQPNILAEYIAGQLKSRVSFRKAMKKAIELTEQTDTKGIQVQIAGRIDGKEIARVEWIREGRVPLQTIRAKIDYCSYTVRTIYGVLGIKIWIFVDEE</sequence>
<name>RR3_PLAOC</name>
<accession>Q09G07</accession>
<protein>
    <recommendedName>
        <fullName evidence="2">Small ribosomal subunit protein uS3c</fullName>
    </recommendedName>
    <alternativeName>
        <fullName>30S ribosomal protein S3, chloroplastic</fullName>
    </alternativeName>
</protein>
<feature type="chain" id="PRO_0000293954" description="Small ribosomal subunit protein uS3c">
    <location>
        <begin position="1"/>
        <end position="217"/>
    </location>
</feature>
<feature type="domain" description="KH type-2">
    <location>
        <begin position="43"/>
        <end position="117"/>
    </location>
</feature>
<organism>
    <name type="scientific">Platanus occidentalis</name>
    <name type="common">Sycamore</name>
    <name type="synonym">American plane tree</name>
    <dbReference type="NCBI Taxonomy" id="4403"/>
    <lineage>
        <taxon>Eukaryota</taxon>
        <taxon>Viridiplantae</taxon>
        <taxon>Streptophyta</taxon>
        <taxon>Embryophyta</taxon>
        <taxon>Tracheophyta</taxon>
        <taxon>Spermatophyta</taxon>
        <taxon>Magnoliopsida</taxon>
        <taxon>Proteales</taxon>
        <taxon>Platanaceae</taxon>
        <taxon>Platanus</taxon>
    </lineage>
</organism>
<gene>
    <name type="primary">rps3</name>
</gene>
<geneLocation type="chloroplast"/>
<evidence type="ECO:0000250" key="1"/>
<evidence type="ECO:0000305" key="2"/>
<dbReference type="EMBL" id="DQ923116">
    <property type="protein sequence ID" value="ABI49818.1"/>
    <property type="molecule type" value="Genomic_DNA"/>
</dbReference>
<dbReference type="RefSeq" id="YP_740604.1">
    <property type="nucleotide sequence ID" value="NC_008335.1"/>
</dbReference>
<dbReference type="SMR" id="Q09G07"/>
<dbReference type="GeneID" id="4271279"/>
<dbReference type="GO" id="GO:0009507">
    <property type="term" value="C:chloroplast"/>
    <property type="evidence" value="ECO:0007669"/>
    <property type="project" value="UniProtKB-SubCell"/>
</dbReference>
<dbReference type="GO" id="GO:0022627">
    <property type="term" value="C:cytosolic small ribosomal subunit"/>
    <property type="evidence" value="ECO:0007669"/>
    <property type="project" value="TreeGrafter"/>
</dbReference>
<dbReference type="GO" id="GO:0019843">
    <property type="term" value="F:rRNA binding"/>
    <property type="evidence" value="ECO:0007669"/>
    <property type="project" value="UniProtKB-UniRule"/>
</dbReference>
<dbReference type="GO" id="GO:0003735">
    <property type="term" value="F:structural constituent of ribosome"/>
    <property type="evidence" value="ECO:0007669"/>
    <property type="project" value="InterPro"/>
</dbReference>
<dbReference type="GO" id="GO:0006412">
    <property type="term" value="P:translation"/>
    <property type="evidence" value="ECO:0007669"/>
    <property type="project" value="UniProtKB-UniRule"/>
</dbReference>
<dbReference type="CDD" id="cd02412">
    <property type="entry name" value="KH-II_30S_S3"/>
    <property type="match status" value="1"/>
</dbReference>
<dbReference type="FunFam" id="3.30.1140.32:FF:000003">
    <property type="entry name" value="30S ribosomal protein S3, chloroplastic"/>
    <property type="match status" value="1"/>
</dbReference>
<dbReference type="FunFam" id="3.30.300.20:FF:000008">
    <property type="entry name" value="30S ribosomal protein S3, chloroplastic"/>
    <property type="match status" value="1"/>
</dbReference>
<dbReference type="Gene3D" id="3.30.300.20">
    <property type="match status" value="1"/>
</dbReference>
<dbReference type="Gene3D" id="3.30.1140.32">
    <property type="entry name" value="Ribosomal protein S3, C-terminal domain"/>
    <property type="match status" value="1"/>
</dbReference>
<dbReference type="HAMAP" id="MF_01309_B">
    <property type="entry name" value="Ribosomal_uS3_B"/>
    <property type="match status" value="1"/>
</dbReference>
<dbReference type="InterPro" id="IPR015946">
    <property type="entry name" value="KH_dom-like_a/b"/>
</dbReference>
<dbReference type="InterPro" id="IPR004044">
    <property type="entry name" value="KH_dom_type_2"/>
</dbReference>
<dbReference type="InterPro" id="IPR009019">
    <property type="entry name" value="KH_sf_prok-type"/>
</dbReference>
<dbReference type="InterPro" id="IPR036419">
    <property type="entry name" value="Ribosomal_S3_C_sf"/>
</dbReference>
<dbReference type="InterPro" id="IPR005704">
    <property type="entry name" value="Ribosomal_uS3_bac-typ"/>
</dbReference>
<dbReference type="InterPro" id="IPR001351">
    <property type="entry name" value="Ribosomal_uS3_C"/>
</dbReference>
<dbReference type="InterPro" id="IPR018280">
    <property type="entry name" value="Ribosomal_uS3_CS"/>
</dbReference>
<dbReference type="NCBIfam" id="TIGR01009">
    <property type="entry name" value="rpsC_bact"/>
    <property type="match status" value="1"/>
</dbReference>
<dbReference type="PANTHER" id="PTHR11760">
    <property type="entry name" value="30S/40S RIBOSOMAL PROTEIN S3"/>
    <property type="match status" value="1"/>
</dbReference>
<dbReference type="PANTHER" id="PTHR11760:SF19">
    <property type="entry name" value="SMALL RIBOSOMAL SUBUNIT PROTEIN US3C"/>
    <property type="match status" value="1"/>
</dbReference>
<dbReference type="Pfam" id="PF00189">
    <property type="entry name" value="Ribosomal_S3_C"/>
    <property type="match status" value="1"/>
</dbReference>
<dbReference type="SUPFAM" id="SSF54814">
    <property type="entry name" value="Prokaryotic type KH domain (KH-domain type II)"/>
    <property type="match status" value="1"/>
</dbReference>
<dbReference type="SUPFAM" id="SSF54821">
    <property type="entry name" value="Ribosomal protein S3 C-terminal domain"/>
    <property type="match status" value="1"/>
</dbReference>
<dbReference type="PROSITE" id="PS50823">
    <property type="entry name" value="KH_TYPE_2"/>
    <property type="match status" value="1"/>
</dbReference>
<dbReference type="PROSITE" id="PS00548">
    <property type="entry name" value="RIBOSOMAL_S3"/>
    <property type="match status" value="1"/>
</dbReference>